<sequence length="481" mass="54378">MHSKTRLPQAFIDKMTGILPNQLKIEDFIAVCQRPLRRAIRVNTLKISVEKFQIRAQEQGWVLTAIPWCAEGFWIELQEEPTPLGNSAEHLGGLCYIQEASSMLPVAALFHFFTPTTQSIVLDAAAAPGSKTTQIAAKMNNSGLIIGNEFSSSRIKMLHANIQRCGIKNVALTHFDARVFGKWLPGTFDAILLDAPCSGEGTVRKDKYAMNNWSQSSINEIASTQQELILSAFHALKEDGILIYSTCTLSHEENQDICFFLKDKFPEHIEFLDLETLFTDAKKTRTAEGFLHIWPQVYDSEGFFVAAIKKTKACTVAPAVKRLGKFPFIRPTRQKEQALYEYFASQFAITNIKGMLYQRDQELWLFPDPIKPLIKELRFSRLGIKIAEEFGNGRKSGFKSTHEFVTCFGDSIDAHKLELSAEQAQEFYQGRDIRDIDAKGFKGEVLLSYRGHVIGLGKSLDNRIKNSLPRELIRDNNLFIK</sequence>
<dbReference type="EC" id="2.1.1.178" evidence="1"/>
<dbReference type="EMBL" id="CP000510">
    <property type="protein sequence ID" value="ABM03965.1"/>
    <property type="molecule type" value="Genomic_DNA"/>
</dbReference>
<dbReference type="RefSeq" id="WP_011770525.1">
    <property type="nucleotide sequence ID" value="NC_008709.1"/>
</dbReference>
<dbReference type="SMR" id="A1SWV0"/>
<dbReference type="STRING" id="357804.Ping_2224"/>
<dbReference type="KEGG" id="pin:Ping_2224"/>
<dbReference type="eggNOG" id="COG0144">
    <property type="taxonomic scope" value="Bacteria"/>
</dbReference>
<dbReference type="eggNOG" id="COG3270">
    <property type="taxonomic scope" value="Bacteria"/>
</dbReference>
<dbReference type="HOGENOM" id="CLU_005316_6_2_6"/>
<dbReference type="OrthoDB" id="9810297at2"/>
<dbReference type="Proteomes" id="UP000000639">
    <property type="component" value="Chromosome"/>
</dbReference>
<dbReference type="GO" id="GO:0005737">
    <property type="term" value="C:cytoplasm"/>
    <property type="evidence" value="ECO:0007669"/>
    <property type="project" value="UniProtKB-SubCell"/>
</dbReference>
<dbReference type="GO" id="GO:0003723">
    <property type="term" value="F:RNA binding"/>
    <property type="evidence" value="ECO:0007669"/>
    <property type="project" value="UniProtKB-KW"/>
</dbReference>
<dbReference type="GO" id="GO:0009383">
    <property type="term" value="F:rRNA (cytosine-C5-)-methyltransferase activity"/>
    <property type="evidence" value="ECO:0007669"/>
    <property type="project" value="TreeGrafter"/>
</dbReference>
<dbReference type="GO" id="GO:0070475">
    <property type="term" value="P:rRNA base methylation"/>
    <property type="evidence" value="ECO:0007669"/>
    <property type="project" value="TreeGrafter"/>
</dbReference>
<dbReference type="CDD" id="cd02440">
    <property type="entry name" value="AdoMet_MTases"/>
    <property type="match status" value="1"/>
</dbReference>
<dbReference type="Gene3D" id="3.10.450.720">
    <property type="match status" value="1"/>
</dbReference>
<dbReference type="Gene3D" id="3.40.50.150">
    <property type="entry name" value="Vaccinia Virus protein VP39"/>
    <property type="match status" value="1"/>
</dbReference>
<dbReference type="HAMAP" id="MF_01579">
    <property type="entry name" value="16SrRNA_methyltr_F"/>
    <property type="match status" value="1"/>
</dbReference>
<dbReference type="InterPro" id="IPR031341">
    <property type="entry name" value="Methyltr_RsmF_N"/>
</dbReference>
<dbReference type="InterPro" id="IPR049560">
    <property type="entry name" value="MeTrfase_RsmB-F_NOP2_cat"/>
</dbReference>
<dbReference type="InterPro" id="IPR001678">
    <property type="entry name" value="MeTrfase_RsmB-F_NOP2_dom"/>
</dbReference>
<dbReference type="InterPro" id="IPR027391">
    <property type="entry name" value="Nol1_Nop2_Fmu_2"/>
</dbReference>
<dbReference type="InterPro" id="IPR011023">
    <property type="entry name" value="Nop2p"/>
</dbReference>
<dbReference type="InterPro" id="IPR023267">
    <property type="entry name" value="RCMT"/>
</dbReference>
<dbReference type="InterPro" id="IPR023545">
    <property type="entry name" value="rRNA_ssu_MeTfrase_F"/>
</dbReference>
<dbReference type="InterPro" id="IPR018314">
    <property type="entry name" value="RsmB/NOL1/NOP2-like_CS"/>
</dbReference>
<dbReference type="InterPro" id="IPR029063">
    <property type="entry name" value="SAM-dependent_MTases_sf"/>
</dbReference>
<dbReference type="InterPro" id="IPR048457">
    <property type="entry name" value="YebU_pre-PUA_dom"/>
</dbReference>
<dbReference type="NCBIfam" id="TIGR00446">
    <property type="entry name" value="nop2p"/>
    <property type="match status" value="1"/>
</dbReference>
<dbReference type="NCBIfam" id="NF008898">
    <property type="entry name" value="PRK11933.1"/>
    <property type="match status" value="1"/>
</dbReference>
<dbReference type="PANTHER" id="PTHR22807:SF30">
    <property type="entry name" value="28S RRNA (CYTOSINE(4447)-C(5))-METHYLTRANSFERASE-RELATED"/>
    <property type="match status" value="1"/>
</dbReference>
<dbReference type="PANTHER" id="PTHR22807">
    <property type="entry name" value="NOP2 YEAST -RELATED NOL1/NOP2/FMU SUN DOMAIN-CONTAINING"/>
    <property type="match status" value="1"/>
</dbReference>
<dbReference type="Pfam" id="PF01189">
    <property type="entry name" value="Methyltr_RsmB-F"/>
    <property type="match status" value="1"/>
</dbReference>
<dbReference type="Pfam" id="PF17125">
    <property type="entry name" value="Methyltr_RsmF_N"/>
    <property type="match status" value="1"/>
</dbReference>
<dbReference type="Pfam" id="PF13636">
    <property type="entry name" value="Methyltranf_PUA"/>
    <property type="match status" value="1"/>
</dbReference>
<dbReference type="Pfam" id="PF21150">
    <property type="entry name" value="YebU_pre-PUA_dom"/>
    <property type="match status" value="1"/>
</dbReference>
<dbReference type="PRINTS" id="PR02008">
    <property type="entry name" value="RCMTFAMILY"/>
</dbReference>
<dbReference type="SUPFAM" id="SSF53335">
    <property type="entry name" value="S-adenosyl-L-methionine-dependent methyltransferases"/>
    <property type="match status" value="1"/>
</dbReference>
<dbReference type="PROSITE" id="PS01153">
    <property type="entry name" value="NOL1_NOP2_SUN"/>
    <property type="match status" value="1"/>
</dbReference>
<dbReference type="PROSITE" id="PS51686">
    <property type="entry name" value="SAM_MT_RSMB_NOP"/>
    <property type="match status" value="1"/>
</dbReference>
<protein>
    <recommendedName>
        <fullName evidence="1">Ribosomal RNA small subunit methyltransferase F</fullName>
        <ecNumber evidence="1">2.1.1.178</ecNumber>
    </recommendedName>
    <alternativeName>
        <fullName evidence="1">16S rRNA m5C1407 methyltransferase</fullName>
    </alternativeName>
    <alternativeName>
        <fullName evidence="1">rRNA (cytosine-C(5)-)-methyltransferase RsmF</fullName>
    </alternativeName>
</protein>
<organism>
    <name type="scientific">Psychromonas ingrahamii (strain DSM 17664 / CCUG 51855 / 37)</name>
    <dbReference type="NCBI Taxonomy" id="357804"/>
    <lineage>
        <taxon>Bacteria</taxon>
        <taxon>Pseudomonadati</taxon>
        <taxon>Pseudomonadota</taxon>
        <taxon>Gammaproteobacteria</taxon>
        <taxon>Alteromonadales</taxon>
        <taxon>Psychromonadaceae</taxon>
        <taxon>Psychromonas</taxon>
    </lineage>
</organism>
<accession>A1SWV0</accession>
<feature type="chain" id="PRO_0000285004" description="Ribosomal RNA small subunit methyltransferase F">
    <location>
        <begin position="1"/>
        <end position="481"/>
    </location>
</feature>
<feature type="active site" description="Nucleophile" evidence="1">
    <location>
        <position position="247"/>
    </location>
</feature>
<feature type="binding site" evidence="1">
    <location>
        <begin position="125"/>
        <end position="131"/>
    </location>
    <ligand>
        <name>S-adenosyl-L-methionine</name>
        <dbReference type="ChEBI" id="CHEBI:59789"/>
    </ligand>
</feature>
<feature type="binding site" evidence="1">
    <location>
        <position position="149"/>
    </location>
    <ligand>
        <name>S-adenosyl-L-methionine</name>
        <dbReference type="ChEBI" id="CHEBI:59789"/>
    </ligand>
</feature>
<feature type="binding site" evidence="1">
    <location>
        <position position="176"/>
    </location>
    <ligand>
        <name>S-adenosyl-L-methionine</name>
        <dbReference type="ChEBI" id="CHEBI:59789"/>
    </ligand>
</feature>
<feature type="binding site" evidence="1">
    <location>
        <position position="194"/>
    </location>
    <ligand>
        <name>S-adenosyl-L-methionine</name>
        <dbReference type="ChEBI" id="CHEBI:59789"/>
    </ligand>
</feature>
<evidence type="ECO:0000255" key="1">
    <source>
        <dbReference type="HAMAP-Rule" id="MF_01579"/>
    </source>
</evidence>
<name>RSMF_PSYIN</name>
<comment type="function">
    <text evidence="1">Specifically methylates the cytosine at position 1407 (m5C1407) of 16S rRNA.</text>
</comment>
<comment type="catalytic activity">
    <reaction evidence="1">
        <text>cytidine(1407) in 16S rRNA + S-adenosyl-L-methionine = 5-methylcytidine(1407) in 16S rRNA + S-adenosyl-L-homocysteine + H(+)</text>
        <dbReference type="Rhea" id="RHEA:42756"/>
        <dbReference type="Rhea" id="RHEA-COMP:10223"/>
        <dbReference type="Rhea" id="RHEA-COMP:10224"/>
        <dbReference type="ChEBI" id="CHEBI:15378"/>
        <dbReference type="ChEBI" id="CHEBI:57856"/>
        <dbReference type="ChEBI" id="CHEBI:59789"/>
        <dbReference type="ChEBI" id="CHEBI:74483"/>
        <dbReference type="ChEBI" id="CHEBI:82748"/>
        <dbReference type="EC" id="2.1.1.178"/>
    </reaction>
</comment>
<comment type="subcellular location">
    <subcellularLocation>
        <location evidence="1">Cytoplasm</location>
    </subcellularLocation>
</comment>
<comment type="similarity">
    <text evidence="1">Belongs to the class I-like SAM-binding methyltransferase superfamily. RsmB/NOP family.</text>
</comment>
<reference key="1">
    <citation type="journal article" date="2008" name="BMC Genomics">
        <title>Genomics of an extreme psychrophile, Psychromonas ingrahamii.</title>
        <authorList>
            <person name="Riley M."/>
            <person name="Staley J.T."/>
            <person name="Danchin A."/>
            <person name="Wang T.Z."/>
            <person name="Brettin T.S."/>
            <person name="Hauser L.J."/>
            <person name="Land M.L."/>
            <person name="Thompson L.S."/>
        </authorList>
    </citation>
    <scope>NUCLEOTIDE SEQUENCE [LARGE SCALE GENOMIC DNA]</scope>
    <source>
        <strain>DSM 17664 / CCUG 51855 / 37</strain>
    </source>
</reference>
<proteinExistence type="inferred from homology"/>
<gene>
    <name evidence="1" type="primary">rsmF</name>
    <name type="ordered locus">Ping_2224</name>
</gene>
<keyword id="KW-0963">Cytoplasm</keyword>
<keyword id="KW-0489">Methyltransferase</keyword>
<keyword id="KW-1185">Reference proteome</keyword>
<keyword id="KW-0694">RNA-binding</keyword>
<keyword id="KW-0698">rRNA processing</keyword>
<keyword id="KW-0949">S-adenosyl-L-methionine</keyword>
<keyword id="KW-0808">Transferase</keyword>